<organism evidence="10">
    <name type="scientific">Oryza sativa subsp. japonica</name>
    <name type="common">Rice</name>
    <dbReference type="NCBI Taxonomy" id="39947"/>
    <lineage>
        <taxon>Eukaryota</taxon>
        <taxon>Viridiplantae</taxon>
        <taxon>Streptophyta</taxon>
        <taxon>Embryophyta</taxon>
        <taxon>Tracheophyta</taxon>
        <taxon>Spermatophyta</taxon>
        <taxon>Magnoliopsida</taxon>
        <taxon>Liliopsida</taxon>
        <taxon>Poales</taxon>
        <taxon>Poaceae</taxon>
        <taxon>BOP clade</taxon>
        <taxon>Oryzoideae</taxon>
        <taxon>Oryzeae</taxon>
        <taxon>Oryzinae</taxon>
        <taxon>Oryza</taxon>
        <taxon>Oryza sativa</taxon>
    </lineage>
</organism>
<name>OS9_ORYSJ</name>
<gene>
    <name evidence="6" type="primary">OS9</name>
    <name evidence="8" type="ordered locus">Os06g0644800</name>
    <name evidence="6" type="ordered locus">LOC_Os06g43710</name>
    <name evidence="9" type="ORF">OsJ_22141</name>
    <name evidence="7" type="ORF">P0017B12.18-1</name>
</gene>
<sequence>MGLAGGARVVLFVVAAAAAAALTAAADQIFTSSGAPFGRNSREPRYHVEFHPVDAPFNPENGQESVPMTSHVGKHYTCFLPVEETKTMKSIIPQNATNVIIESERRVKPKDPDELLEILKDQCFYRHEGWWSYEFCYYGKIRQVHVEGEKVIQEYVLGEYDADATDAYYENQTSDSADEDDNLIDTSKRYHVHLYTNGTVCDLTDMPRETEVRFVCSEPTVVISSIKEISSCKYVLTVQSPMLCKNPLFQQEKRTLSIHCNELLAEAEATVDDDSLPKEAQIIIPDPDGLHNYAAYAT</sequence>
<comment type="function">
    <text evidence="2">Lectin which functions in endoplasmic reticulum (ER) quality control and ER-associated degradation (ERAD). May bind terminally misfolded non-glycosylated proteins as well as improperly folded glycoproteins, retain them in the ER, and possibly transfer them to the ubiquitination machinery and promote their degradation.</text>
</comment>
<comment type="subunit">
    <text evidence="2">Interacts with HRD3.</text>
</comment>
<comment type="subcellular location">
    <subcellularLocation>
        <location evidence="2">Endoplasmic reticulum</location>
    </subcellularLocation>
</comment>
<comment type="similarity">
    <text evidence="6">Belongs to the OS-9 family.</text>
</comment>
<reference key="1">
    <citation type="journal article" date="2005" name="Nature">
        <title>The map-based sequence of the rice genome.</title>
        <authorList>
            <consortium name="International rice genome sequencing project (IRGSP)"/>
        </authorList>
    </citation>
    <scope>NUCLEOTIDE SEQUENCE [LARGE SCALE GENOMIC DNA]</scope>
    <source>
        <strain>cv. Nipponbare</strain>
    </source>
</reference>
<reference key="2">
    <citation type="journal article" date="2008" name="Nucleic Acids Res.">
        <title>The rice annotation project database (RAP-DB): 2008 update.</title>
        <authorList>
            <consortium name="The rice annotation project (RAP)"/>
        </authorList>
    </citation>
    <scope>GENOME REANNOTATION</scope>
    <source>
        <strain>cv. Nipponbare</strain>
    </source>
</reference>
<reference key="3">
    <citation type="journal article" date="2013" name="Rice">
        <title>Improvement of the Oryza sativa Nipponbare reference genome using next generation sequence and optical map data.</title>
        <authorList>
            <person name="Kawahara Y."/>
            <person name="de la Bastide M."/>
            <person name="Hamilton J.P."/>
            <person name="Kanamori H."/>
            <person name="McCombie W.R."/>
            <person name="Ouyang S."/>
            <person name="Schwartz D.C."/>
            <person name="Tanaka T."/>
            <person name="Wu J."/>
            <person name="Zhou S."/>
            <person name="Childs K.L."/>
            <person name="Davidson R.M."/>
            <person name="Lin H."/>
            <person name="Quesada-Ocampo L."/>
            <person name="Vaillancourt B."/>
            <person name="Sakai H."/>
            <person name="Lee S.S."/>
            <person name="Kim J."/>
            <person name="Numa H."/>
            <person name="Itoh T."/>
            <person name="Buell C.R."/>
            <person name="Matsumoto T."/>
        </authorList>
    </citation>
    <scope>GENOME REANNOTATION</scope>
    <source>
        <strain>cv. Nipponbare</strain>
    </source>
</reference>
<reference key="4">
    <citation type="journal article" date="2005" name="PLoS Biol.">
        <title>The genomes of Oryza sativa: a history of duplications.</title>
        <authorList>
            <person name="Yu J."/>
            <person name="Wang J."/>
            <person name="Lin W."/>
            <person name="Li S."/>
            <person name="Li H."/>
            <person name="Zhou J."/>
            <person name="Ni P."/>
            <person name="Dong W."/>
            <person name="Hu S."/>
            <person name="Zeng C."/>
            <person name="Zhang J."/>
            <person name="Zhang Y."/>
            <person name="Li R."/>
            <person name="Xu Z."/>
            <person name="Li S."/>
            <person name="Li X."/>
            <person name="Zheng H."/>
            <person name="Cong L."/>
            <person name="Lin L."/>
            <person name="Yin J."/>
            <person name="Geng J."/>
            <person name="Li G."/>
            <person name="Shi J."/>
            <person name="Liu J."/>
            <person name="Lv H."/>
            <person name="Li J."/>
            <person name="Wang J."/>
            <person name="Deng Y."/>
            <person name="Ran L."/>
            <person name="Shi X."/>
            <person name="Wang X."/>
            <person name="Wu Q."/>
            <person name="Li C."/>
            <person name="Ren X."/>
            <person name="Wang J."/>
            <person name="Wang X."/>
            <person name="Li D."/>
            <person name="Liu D."/>
            <person name="Zhang X."/>
            <person name="Ji Z."/>
            <person name="Zhao W."/>
            <person name="Sun Y."/>
            <person name="Zhang Z."/>
            <person name="Bao J."/>
            <person name="Han Y."/>
            <person name="Dong L."/>
            <person name="Ji J."/>
            <person name="Chen P."/>
            <person name="Wu S."/>
            <person name="Liu J."/>
            <person name="Xiao Y."/>
            <person name="Bu D."/>
            <person name="Tan J."/>
            <person name="Yang L."/>
            <person name="Ye C."/>
            <person name="Zhang J."/>
            <person name="Xu J."/>
            <person name="Zhou Y."/>
            <person name="Yu Y."/>
            <person name="Zhang B."/>
            <person name="Zhuang S."/>
            <person name="Wei H."/>
            <person name="Liu B."/>
            <person name="Lei M."/>
            <person name="Yu H."/>
            <person name="Li Y."/>
            <person name="Xu H."/>
            <person name="Wei S."/>
            <person name="He X."/>
            <person name="Fang L."/>
            <person name="Zhang Z."/>
            <person name="Zhang Y."/>
            <person name="Huang X."/>
            <person name="Su Z."/>
            <person name="Tong W."/>
            <person name="Li J."/>
            <person name="Tong Z."/>
            <person name="Li S."/>
            <person name="Ye J."/>
            <person name="Wang L."/>
            <person name="Fang L."/>
            <person name="Lei T."/>
            <person name="Chen C.-S."/>
            <person name="Chen H.-C."/>
            <person name="Xu Z."/>
            <person name="Li H."/>
            <person name="Huang H."/>
            <person name="Zhang F."/>
            <person name="Xu H."/>
            <person name="Li N."/>
            <person name="Zhao C."/>
            <person name="Li S."/>
            <person name="Dong L."/>
            <person name="Huang Y."/>
            <person name="Li L."/>
            <person name="Xi Y."/>
            <person name="Qi Q."/>
            <person name="Li W."/>
            <person name="Zhang B."/>
            <person name="Hu W."/>
            <person name="Zhang Y."/>
            <person name="Tian X."/>
            <person name="Jiao Y."/>
            <person name="Liang X."/>
            <person name="Jin J."/>
            <person name="Gao L."/>
            <person name="Zheng W."/>
            <person name="Hao B."/>
            <person name="Liu S.-M."/>
            <person name="Wang W."/>
            <person name="Yuan L."/>
            <person name="Cao M."/>
            <person name="McDermott J."/>
            <person name="Samudrala R."/>
            <person name="Wang J."/>
            <person name="Wong G.K.-S."/>
            <person name="Yang H."/>
        </authorList>
    </citation>
    <scope>NUCLEOTIDE SEQUENCE [LARGE SCALE GENOMIC DNA]</scope>
    <source>
        <strain>cv. Nipponbare</strain>
    </source>
</reference>
<reference key="5">
    <citation type="journal article" date="2003" name="Science">
        <title>Collection, mapping, and annotation of over 28,000 cDNA clones from japonica rice.</title>
        <authorList>
            <consortium name="The rice full-length cDNA consortium"/>
        </authorList>
    </citation>
    <scope>NUCLEOTIDE SEQUENCE [LARGE SCALE MRNA]</scope>
    <source>
        <strain>cv. Nipponbare</strain>
    </source>
</reference>
<keyword id="KW-1015">Disulfide bond</keyword>
<keyword id="KW-0256">Endoplasmic reticulum</keyword>
<keyword id="KW-0325">Glycoprotein</keyword>
<keyword id="KW-0430">Lectin</keyword>
<keyword id="KW-1185">Reference proteome</keyword>
<keyword id="KW-0732">Signal</keyword>
<accession>Q67WM9</accession>
<accession>A0A0P0WZD9</accession>
<evidence type="ECO:0000250" key="1">
    <source>
        <dbReference type="UniProtKB" id="Q13438"/>
    </source>
</evidence>
<evidence type="ECO:0000250" key="2">
    <source>
        <dbReference type="UniProtKB" id="Q8GWH3"/>
    </source>
</evidence>
<evidence type="ECO:0000255" key="3"/>
<evidence type="ECO:0000255" key="4">
    <source>
        <dbReference type="PROSITE-ProRule" id="PRU00498"/>
    </source>
</evidence>
<evidence type="ECO:0000255" key="5">
    <source>
        <dbReference type="PROSITE-ProRule" id="PRU01262"/>
    </source>
</evidence>
<evidence type="ECO:0000305" key="6"/>
<evidence type="ECO:0000312" key="7">
    <source>
        <dbReference type="EMBL" id="BAD37440.1"/>
    </source>
</evidence>
<evidence type="ECO:0000312" key="8">
    <source>
        <dbReference type="EMBL" id="BAH93656.1"/>
    </source>
</evidence>
<evidence type="ECO:0000312" key="9">
    <source>
        <dbReference type="EMBL" id="EAZ37805.1"/>
    </source>
</evidence>
<evidence type="ECO:0000312" key="10">
    <source>
        <dbReference type="Proteomes" id="UP000059680"/>
    </source>
</evidence>
<dbReference type="EMBL" id="AP003568">
    <property type="protein sequence ID" value="BAD37440.1"/>
    <property type="molecule type" value="Genomic_DNA"/>
</dbReference>
<dbReference type="EMBL" id="AP008212">
    <property type="protein sequence ID" value="BAH93656.1"/>
    <property type="molecule type" value="Genomic_DNA"/>
</dbReference>
<dbReference type="EMBL" id="AP014962">
    <property type="protein sequence ID" value="BAS98847.1"/>
    <property type="molecule type" value="Genomic_DNA"/>
</dbReference>
<dbReference type="EMBL" id="CM000143">
    <property type="protein sequence ID" value="EAZ37805.1"/>
    <property type="molecule type" value="Genomic_DNA"/>
</dbReference>
<dbReference type="EMBL" id="AK109442">
    <property type="protein sequence ID" value="BAG98751.1"/>
    <property type="molecule type" value="mRNA"/>
</dbReference>
<dbReference type="RefSeq" id="XP_015641067.1">
    <property type="nucleotide sequence ID" value="XM_015785581.1"/>
</dbReference>
<dbReference type="FunCoup" id="Q67WM9">
    <property type="interactions" value="752"/>
</dbReference>
<dbReference type="STRING" id="39947.Q67WM9"/>
<dbReference type="GlyCosmos" id="Q67WM9">
    <property type="glycosylation" value="3 sites, No reported glycans"/>
</dbReference>
<dbReference type="PaxDb" id="39947-Q67WM9"/>
<dbReference type="EnsemblPlants" id="Os06t0644800-01">
    <property type="protein sequence ID" value="Os06t0644800-01"/>
    <property type="gene ID" value="Os06g0644800"/>
</dbReference>
<dbReference type="Gramene" id="Os06t0644800-01">
    <property type="protein sequence ID" value="Os06t0644800-01"/>
    <property type="gene ID" value="Os06g0644800"/>
</dbReference>
<dbReference type="KEGG" id="dosa:Os06g0644800"/>
<dbReference type="eggNOG" id="KOG3394">
    <property type="taxonomic scope" value="Eukaryota"/>
</dbReference>
<dbReference type="HOGENOM" id="CLU_077023_0_0_1"/>
<dbReference type="InParanoid" id="Q67WM9"/>
<dbReference type="OMA" id="TMCDLTN"/>
<dbReference type="OrthoDB" id="448954at2759"/>
<dbReference type="Proteomes" id="UP000000763">
    <property type="component" value="Chromosome 6"/>
</dbReference>
<dbReference type="Proteomes" id="UP000007752">
    <property type="component" value="Chromosome 6"/>
</dbReference>
<dbReference type="Proteomes" id="UP000059680">
    <property type="component" value="Chromosome 6"/>
</dbReference>
<dbReference type="ExpressionAtlas" id="Q67WM9">
    <property type="expression patterns" value="baseline and differential"/>
</dbReference>
<dbReference type="GO" id="GO:0005788">
    <property type="term" value="C:endoplasmic reticulum lumen"/>
    <property type="evidence" value="ECO:0000318"/>
    <property type="project" value="GO_Central"/>
</dbReference>
<dbReference type="GO" id="GO:0030246">
    <property type="term" value="F:carbohydrate binding"/>
    <property type="evidence" value="ECO:0007669"/>
    <property type="project" value="UniProtKB-KW"/>
</dbReference>
<dbReference type="GO" id="GO:0030968">
    <property type="term" value="P:endoplasmic reticulum unfolded protein response"/>
    <property type="evidence" value="ECO:0007669"/>
    <property type="project" value="InterPro"/>
</dbReference>
<dbReference type="GO" id="GO:0009651">
    <property type="term" value="P:response to salt stress"/>
    <property type="evidence" value="ECO:0007669"/>
    <property type="project" value="EnsemblPlants"/>
</dbReference>
<dbReference type="GO" id="GO:0030970">
    <property type="term" value="P:retrograde protein transport, ER to cytosol"/>
    <property type="evidence" value="ECO:0000318"/>
    <property type="project" value="GO_Central"/>
</dbReference>
<dbReference type="FunFam" id="2.70.130.10:FF:000021">
    <property type="entry name" value="Protein OS-9 homolog"/>
    <property type="match status" value="1"/>
</dbReference>
<dbReference type="Gene3D" id="2.70.130.10">
    <property type="entry name" value="Mannose-6-phosphate receptor binding domain"/>
    <property type="match status" value="1"/>
</dbReference>
<dbReference type="InterPro" id="IPR009011">
    <property type="entry name" value="Man6P_isomerase_rcpt-bd_dom_sf"/>
</dbReference>
<dbReference type="InterPro" id="IPR044865">
    <property type="entry name" value="MRH_dom"/>
</dbReference>
<dbReference type="InterPro" id="IPR045149">
    <property type="entry name" value="OS-9-like"/>
</dbReference>
<dbReference type="InterPro" id="IPR012913">
    <property type="entry name" value="OS9-like_dom"/>
</dbReference>
<dbReference type="PANTHER" id="PTHR15414:SF0">
    <property type="entry name" value="ENDOPLASMIC RETICULUM LECTIN 1"/>
    <property type="match status" value="1"/>
</dbReference>
<dbReference type="PANTHER" id="PTHR15414">
    <property type="entry name" value="OS-9-RELATED"/>
    <property type="match status" value="1"/>
</dbReference>
<dbReference type="Pfam" id="PF07915">
    <property type="entry name" value="PRKCSH"/>
    <property type="match status" value="1"/>
</dbReference>
<dbReference type="SUPFAM" id="SSF50911">
    <property type="entry name" value="Mannose 6-phosphate receptor domain"/>
    <property type="match status" value="1"/>
</dbReference>
<dbReference type="PROSITE" id="PS51914">
    <property type="entry name" value="MRH"/>
    <property type="match status" value="1"/>
</dbReference>
<feature type="signal peptide" evidence="3">
    <location>
        <begin position="1"/>
        <end position="25"/>
    </location>
</feature>
<feature type="chain" id="PRO_0000431277" description="Protein OS-9 homolog" evidence="3">
    <location>
        <begin position="26"/>
        <end position="298"/>
    </location>
</feature>
<feature type="domain" description="MRH" evidence="5">
    <location>
        <begin position="121"/>
        <end position="246"/>
    </location>
</feature>
<feature type="binding site" evidence="1">
    <location>
        <position position="130"/>
    </location>
    <ligand>
        <name>a mannooligosaccharide derivative</name>
        <dbReference type="ChEBI" id="CHEBI:71274"/>
    </ligand>
</feature>
<feature type="binding site" evidence="1">
    <location>
        <position position="131"/>
    </location>
    <ligand>
        <name>a mannooligosaccharide derivative</name>
        <dbReference type="ChEBI" id="CHEBI:71274"/>
    </ligand>
</feature>
<feature type="binding site" evidence="1">
    <location>
        <position position="143"/>
    </location>
    <ligand>
        <name>a mannooligosaccharide derivative</name>
        <dbReference type="ChEBI" id="CHEBI:71274"/>
    </ligand>
</feature>
<feature type="binding site" evidence="1">
    <location>
        <position position="202"/>
    </location>
    <ligand>
        <name>a mannooligosaccharide derivative</name>
        <dbReference type="ChEBI" id="CHEBI:71274"/>
    </ligand>
</feature>
<feature type="binding site" evidence="1">
    <location>
        <position position="208"/>
    </location>
    <ligand>
        <name>a mannooligosaccharide derivative</name>
        <dbReference type="ChEBI" id="CHEBI:71274"/>
    </ligand>
</feature>
<feature type="binding site" evidence="1">
    <location>
        <position position="228"/>
    </location>
    <ligand>
        <name>a mannooligosaccharide derivative</name>
        <dbReference type="ChEBI" id="CHEBI:71274"/>
    </ligand>
</feature>
<feature type="binding site" evidence="1">
    <location>
        <position position="234"/>
    </location>
    <ligand>
        <name>a mannooligosaccharide derivative</name>
        <dbReference type="ChEBI" id="CHEBI:71274"/>
    </ligand>
</feature>
<feature type="glycosylation site" description="N-linked (GlcNAc...) asparagine" evidence="4">
    <location>
        <position position="95"/>
    </location>
</feature>
<feature type="glycosylation site" description="N-linked (GlcNAc...) asparagine" evidence="4">
    <location>
        <position position="171"/>
    </location>
</feature>
<feature type="glycosylation site" description="N-linked (GlcNAc...) asparagine" evidence="4">
    <location>
        <position position="197"/>
    </location>
</feature>
<feature type="disulfide bond" evidence="5">
    <location>
        <begin position="123"/>
        <end position="136"/>
    </location>
</feature>
<feature type="disulfide bond" evidence="5">
    <location>
        <begin position="201"/>
        <end position="232"/>
    </location>
</feature>
<feature type="disulfide bond" evidence="5">
    <location>
        <begin position="216"/>
        <end position="244"/>
    </location>
</feature>
<proteinExistence type="evidence at transcript level"/>
<protein>
    <recommendedName>
        <fullName evidence="6">Protein OS-9 homolog</fullName>
        <shortName evidence="6">OsOS9</shortName>
    </recommendedName>
</protein>